<reference key="1">
    <citation type="submission" date="2007-10" db="EMBL/GenBank/DDBJ databases">
        <title>Complete sequence of Methanococcus maripaludis C6.</title>
        <authorList>
            <consortium name="US DOE Joint Genome Institute"/>
            <person name="Copeland A."/>
            <person name="Lucas S."/>
            <person name="Lapidus A."/>
            <person name="Barry K."/>
            <person name="Glavina del Rio T."/>
            <person name="Dalin E."/>
            <person name="Tice H."/>
            <person name="Pitluck S."/>
            <person name="Clum A."/>
            <person name="Schmutz J."/>
            <person name="Larimer F."/>
            <person name="Land M."/>
            <person name="Hauser L."/>
            <person name="Kyrpides N."/>
            <person name="Mikhailova N."/>
            <person name="Sieprawska-Lupa M."/>
            <person name="Whitman W.B."/>
            <person name="Richardson P."/>
        </authorList>
    </citation>
    <scope>NUCLEOTIDE SEQUENCE [LARGE SCALE GENOMIC DNA]</scope>
    <source>
        <strain>C6 / ATCC BAA-1332</strain>
    </source>
</reference>
<accession>A9A8S8</accession>
<evidence type="ECO:0000255" key="1">
    <source>
        <dbReference type="HAMAP-Rule" id="MF_00006"/>
    </source>
</evidence>
<name>ARLY_METM6</name>
<keyword id="KW-0028">Amino-acid biosynthesis</keyword>
<keyword id="KW-0055">Arginine biosynthesis</keyword>
<keyword id="KW-0963">Cytoplasm</keyword>
<keyword id="KW-0456">Lyase</keyword>
<organism>
    <name type="scientific">Methanococcus maripaludis (strain C6 / ATCC BAA-1332)</name>
    <dbReference type="NCBI Taxonomy" id="444158"/>
    <lineage>
        <taxon>Archaea</taxon>
        <taxon>Methanobacteriati</taxon>
        <taxon>Methanobacteriota</taxon>
        <taxon>Methanomada group</taxon>
        <taxon>Methanococci</taxon>
        <taxon>Methanococcales</taxon>
        <taxon>Methanococcaceae</taxon>
        <taxon>Methanococcus</taxon>
    </lineage>
</organism>
<feature type="chain" id="PRO_1000089092" description="Argininosuccinate lyase">
    <location>
        <begin position="1"/>
        <end position="481"/>
    </location>
</feature>
<proteinExistence type="inferred from homology"/>
<protein>
    <recommendedName>
        <fullName evidence="1">Argininosuccinate lyase</fullName>
        <shortName evidence="1">ASAL</shortName>
        <ecNumber evidence="1">4.3.2.1</ecNumber>
    </recommendedName>
    <alternativeName>
        <fullName evidence="1">Arginosuccinase</fullName>
    </alternativeName>
</protein>
<sequence length="481" mass="54314">MNILRRGRLGSNVKEDVMKFTTSLEFDKEIFESDILCDIAHTTMLVEQNVISEENGKKIIAELKKIAEQSMESLNLDPSLDDIHMVIESELIKELGEDVAGRMHTGRSRNDEVATDLRLSLRKKVLEIITHLIAMEKNMLRVSREHKETLTVGYTHLQQAQPVTFGHHILSHVSAIERDISRFFDTYNRINISPLGCGAMATTGFNLNRKRTQELLGFYDLIENSMDGVSSRDFVVETMANISMLGTNLSKICEELVVFSSAEFNTIEIANEYTSTSSIMPQKKNPDVAEITRAKLSTLNGELVTVLTIMKALPNTYNRDLQEISPHLWKSVYTLIDSIQMVDGMISTVKVNKERMKENAEKNYSTATELADTLVRECGIAFRMAHGIVGELVKRSIEEKVEIKEIILEVLEKNNLSLSQEKIDTALDPFENVKLRNVIGGPAPKEVERAISSFNEKISSHKEKLDEKIAEIESVKKNLLK</sequence>
<comment type="catalytic activity">
    <reaction evidence="1">
        <text>2-(N(omega)-L-arginino)succinate = fumarate + L-arginine</text>
        <dbReference type="Rhea" id="RHEA:24020"/>
        <dbReference type="ChEBI" id="CHEBI:29806"/>
        <dbReference type="ChEBI" id="CHEBI:32682"/>
        <dbReference type="ChEBI" id="CHEBI:57472"/>
        <dbReference type="EC" id="4.3.2.1"/>
    </reaction>
</comment>
<comment type="pathway">
    <text evidence="1">Amino-acid biosynthesis; L-arginine biosynthesis; L-arginine from L-ornithine and carbamoyl phosphate: step 3/3.</text>
</comment>
<comment type="subcellular location">
    <subcellularLocation>
        <location evidence="1">Cytoplasm</location>
    </subcellularLocation>
</comment>
<comment type="similarity">
    <text evidence="1">Belongs to the lyase 1 family. Argininosuccinate lyase subfamily.</text>
</comment>
<gene>
    <name evidence="1" type="primary">argH</name>
    <name type="ordered locus">MmarC6_0936</name>
</gene>
<dbReference type="EC" id="4.3.2.1" evidence="1"/>
<dbReference type="EMBL" id="CP000867">
    <property type="protein sequence ID" value="ABX01751.1"/>
    <property type="molecule type" value="Genomic_DNA"/>
</dbReference>
<dbReference type="SMR" id="A9A8S8"/>
<dbReference type="STRING" id="444158.MmarC6_0936"/>
<dbReference type="KEGG" id="mmx:MmarC6_0936"/>
<dbReference type="eggNOG" id="arCOG01748">
    <property type="taxonomic scope" value="Archaea"/>
</dbReference>
<dbReference type="HOGENOM" id="CLU_027272_2_3_2"/>
<dbReference type="OrthoDB" id="27337at2157"/>
<dbReference type="PhylomeDB" id="A9A8S8"/>
<dbReference type="UniPathway" id="UPA00068">
    <property type="reaction ID" value="UER00114"/>
</dbReference>
<dbReference type="GO" id="GO:0005829">
    <property type="term" value="C:cytosol"/>
    <property type="evidence" value="ECO:0007669"/>
    <property type="project" value="TreeGrafter"/>
</dbReference>
<dbReference type="GO" id="GO:0004056">
    <property type="term" value="F:argininosuccinate lyase activity"/>
    <property type="evidence" value="ECO:0007669"/>
    <property type="project" value="UniProtKB-UniRule"/>
</dbReference>
<dbReference type="GO" id="GO:0042450">
    <property type="term" value="P:arginine biosynthetic process via ornithine"/>
    <property type="evidence" value="ECO:0007669"/>
    <property type="project" value="InterPro"/>
</dbReference>
<dbReference type="GO" id="GO:0006526">
    <property type="term" value="P:L-arginine biosynthetic process"/>
    <property type="evidence" value="ECO:0007669"/>
    <property type="project" value="UniProtKB-UniRule"/>
</dbReference>
<dbReference type="CDD" id="cd01359">
    <property type="entry name" value="Argininosuccinate_lyase"/>
    <property type="match status" value="1"/>
</dbReference>
<dbReference type="FunFam" id="1.10.40.30:FF:000001">
    <property type="entry name" value="Argininosuccinate lyase"/>
    <property type="match status" value="1"/>
</dbReference>
<dbReference type="FunFam" id="1.20.200.10:FF:000015">
    <property type="entry name" value="argininosuccinate lyase isoform X2"/>
    <property type="match status" value="1"/>
</dbReference>
<dbReference type="Gene3D" id="1.10.40.30">
    <property type="entry name" value="Fumarase/aspartase (C-terminal domain)"/>
    <property type="match status" value="1"/>
</dbReference>
<dbReference type="Gene3D" id="1.20.200.10">
    <property type="entry name" value="Fumarase/aspartase (Central domain)"/>
    <property type="match status" value="1"/>
</dbReference>
<dbReference type="Gene3D" id="1.10.275.10">
    <property type="entry name" value="Fumarase/aspartase (N-terminal domain)"/>
    <property type="match status" value="1"/>
</dbReference>
<dbReference type="HAMAP" id="MF_00006">
    <property type="entry name" value="Arg_succ_lyase"/>
    <property type="match status" value="1"/>
</dbReference>
<dbReference type="InterPro" id="IPR029419">
    <property type="entry name" value="Arg_succ_lyase_C"/>
</dbReference>
<dbReference type="InterPro" id="IPR009049">
    <property type="entry name" value="Argininosuccinate_lyase"/>
</dbReference>
<dbReference type="InterPro" id="IPR024083">
    <property type="entry name" value="Fumarase/histidase_N"/>
</dbReference>
<dbReference type="InterPro" id="IPR000362">
    <property type="entry name" value="Fumarate_lyase_fam"/>
</dbReference>
<dbReference type="InterPro" id="IPR022761">
    <property type="entry name" value="Fumarate_lyase_N"/>
</dbReference>
<dbReference type="InterPro" id="IPR008948">
    <property type="entry name" value="L-Aspartase-like"/>
</dbReference>
<dbReference type="NCBIfam" id="TIGR00838">
    <property type="entry name" value="argH"/>
    <property type="match status" value="1"/>
</dbReference>
<dbReference type="PANTHER" id="PTHR43814">
    <property type="entry name" value="ARGININOSUCCINATE LYASE"/>
    <property type="match status" value="1"/>
</dbReference>
<dbReference type="PANTHER" id="PTHR43814:SF1">
    <property type="entry name" value="ARGININOSUCCINATE LYASE"/>
    <property type="match status" value="1"/>
</dbReference>
<dbReference type="Pfam" id="PF14698">
    <property type="entry name" value="ASL_C2"/>
    <property type="match status" value="1"/>
</dbReference>
<dbReference type="Pfam" id="PF00206">
    <property type="entry name" value="Lyase_1"/>
    <property type="match status" value="1"/>
</dbReference>
<dbReference type="PRINTS" id="PR00145">
    <property type="entry name" value="ARGSUCLYASE"/>
</dbReference>
<dbReference type="PRINTS" id="PR00149">
    <property type="entry name" value="FUMRATELYASE"/>
</dbReference>
<dbReference type="SUPFAM" id="SSF48557">
    <property type="entry name" value="L-aspartase-like"/>
    <property type="match status" value="1"/>
</dbReference>